<proteinExistence type="inferred from homology"/>
<gene>
    <name evidence="1" type="primary">tatB</name>
    <name type="ordered locus">SFV_3661</name>
</gene>
<organism>
    <name type="scientific">Shigella flexneri serotype 5b (strain 8401)</name>
    <dbReference type="NCBI Taxonomy" id="373384"/>
    <lineage>
        <taxon>Bacteria</taxon>
        <taxon>Pseudomonadati</taxon>
        <taxon>Pseudomonadota</taxon>
        <taxon>Gammaproteobacteria</taxon>
        <taxon>Enterobacterales</taxon>
        <taxon>Enterobacteriaceae</taxon>
        <taxon>Shigella</taxon>
    </lineage>
</organism>
<evidence type="ECO:0000255" key="1">
    <source>
        <dbReference type="HAMAP-Rule" id="MF_00237"/>
    </source>
</evidence>
<evidence type="ECO:0000256" key="2">
    <source>
        <dbReference type="SAM" id="MobiDB-lite"/>
    </source>
</evidence>
<protein>
    <recommendedName>
        <fullName evidence="1">Sec-independent protein translocase protein TatB</fullName>
    </recommendedName>
</protein>
<keyword id="KW-0997">Cell inner membrane</keyword>
<keyword id="KW-1003">Cell membrane</keyword>
<keyword id="KW-0472">Membrane</keyword>
<keyword id="KW-0653">Protein transport</keyword>
<keyword id="KW-0811">Translocation</keyword>
<keyword id="KW-0812">Transmembrane</keyword>
<keyword id="KW-1133">Transmembrane helix</keyword>
<keyword id="KW-0813">Transport</keyword>
<comment type="function">
    <text evidence="1">Part of the twin-arginine translocation (Tat) system that transports large folded proteins containing a characteristic twin-arginine motif in their signal peptide across membranes. Together with TatC, TatB is part of a receptor directly interacting with Tat signal peptides. TatB may form an oligomeric binding site that transiently accommodates folded Tat precursor proteins before their translocation.</text>
</comment>
<comment type="subunit">
    <text evidence="1">The Tat system comprises two distinct complexes: a TatABC complex, containing multiple copies of TatA, TatB and TatC subunits, and a separate TatA complex, containing only TatA subunits. Substrates initially bind to the TatABC complex, which probably triggers association of the separate TatA complex to form the active translocon.</text>
</comment>
<comment type="subcellular location">
    <subcellularLocation>
        <location evidence="1">Cell inner membrane</location>
        <topology evidence="1">Single-pass membrane protein</topology>
    </subcellularLocation>
</comment>
<comment type="similarity">
    <text evidence="1">Belongs to the TatB family.</text>
</comment>
<sequence>MFDIGFSELLLVFIIGLVVLGPQRLPVAVKTVAGWIRALRSLATTVQNELTQELKLQEFQDSLKKVEKASLTNLTPELKASMDELRQAAESMKRSYVANDPEKASDEAHTIHNPVVKDNEAAHEGVTPAAAQTQASSPEQKPETTPEPVVKPAADAEPKTAAPSPSSSDKP</sequence>
<reference key="1">
    <citation type="journal article" date="2006" name="BMC Genomics">
        <title>Complete genome sequence of Shigella flexneri 5b and comparison with Shigella flexneri 2a.</title>
        <authorList>
            <person name="Nie H."/>
            <person name="Yang F."/>
            <person name="Zhang X."/>
            <person name="Yang J."/>
            <person name="Chen L."/>
            <person name="Wang J."/>
            <person name="Xiong Z."/>
            <person name="Peng J."/>
            <person name="Sun L."/>
            <person name="Dong J."/>
            <person name="Xue Y."/>
            <person name="Xu X."/>
            <person name="Chen S."/>
            <person name="Yao Z."/>
            <person name="Shen Y."/>
            <person name="Jin Q."/>
        </authorList>
    </citation>
    <scope>NUCLEOTIDE SEQUENCE [LARGE SCALE GENOMIC DNA]</scope>
    <source>
        <strain>8401</strain>
    </source>
</reference>
<name>TATB_SHIF8</name>
<feature type="chain" id="PRO_0000301240" description="Sec-independent protein translocase protein TatB">
    <location>
        <begin position="1"/>
        <end position="171"/>
    </location>
</feature>
<feature type="transmembrane region" description="Helical" evidence="1">
    <location>
        <begin position="1"/>
        <end position="21"/>
    </location>
</feature>
<feature type="region of interest" description="Disordered" evidence="2">
    <location>
        <begin position="117"/>
        <end position="171"/>
    </location>
</feature>
<feature type="compositionally biased region" description="Polar residues" evidence="2">
    <location>
        <begin position="130"/>
        <end position="139"/>
    </location>
</feature>
<dbReference type="EMBL" id="CP000266">
    <property type="protein sequence ID" value="ABF05686.1"/>
    <property type="molecule type" value="Genomic_DNA"/>
</dbReference>
<dbReference type="RefSeq" id="WP_000459594.1">
    <property type="nucleotide sequence ID" value="NC_008258.1"/>
</dbReference>
<dbReference type="SMR" id="Q0SZ29"/>
<dbReference type="GeneID" id="93778098"/>
<dbReference type="KEGG" id="sfv:SFV_3661"/>
<dbReference type="HOGENOM" id="CLU_086034_1_0_6"/>
<dbReference type="Proteomes" id="UP000000659">
    <property type="component" value="Chromosome"/>
</dbReference>
<dbReference type="GO" id="GO:0033281">
    <property type="term" value="C:TAT protein transport complex"/>
    <property type="evidence" value="ECO:0007669"/>
    <property type="project" value="UniProtKB-UniRule"/>
</dbReference>
<dbReference type="GO" id="GO:0008320">
    <property type="term" value="F:protein transmembrane transporter activity"/>
    <property type="evidence" value="ECO:0007669"/>
    <property type="project" value="UniProtKB-UniRule"/>
</dbReference>
<dbReference type="GO" id="GO:0043953">
    <property type="term" value="P:protein transport by the Tat complex"/>
    <property type="evidence" value="ECO:0007669"/>
    <property type="project" value="UniProtKB-UniRule"/>
</dbReference>
<dbReference type="FunFam" id="1.20.5.3310:FF:000002">
    <property type="entry name" value="Sec-independent protein translocase protein TatB"/>
    <property type="match status" value="1"/>
</dbReference>
<dbReference type="Gene3D" id="1.20.5.3310">
    <property type="match status" value="1"/>
</dbReference>
<dbReference type="HAMAP" id="MF_00237">
    <property type="entry name" value="TatB"/>
    <property type="match status" value="1"/>
</dbReference>
<dbReference type="InterPro" id="IPR018448">
    <property type="entry name" value="TatB"/>
</dbReference>
<dbReference type="NCBIfam" id="TIGR01410">
    <property type="entry name" value="tatB"/>
    <property type="match status" value="1"/>
</dbReference>
<dbReference type="PANTHER" id="PTHR33162">
    <property type="entry name" value="SEC-INDEPENDENT PROTEIN TRANSLOCASE PROTEIN TATA, CHLOROPLASTIC"/>
    <property type="match status" value="1"/>
</dbReference>
<dbReference type="PANTHER" id="PTHR33162:SF1">
    <property type="entry name" value="SEC-INDEPENDENT PROTEIN TRANSLOCASE PROTEIN TATA, CHLOROPLASTIC"/>
    <property type="match status" value="1"/>
</dbReference>
<dbReference type="PRINTS" id="PR01506">
    <property type="entry name" value="TATBPROTEIN"/>
</dbReference>
<accession>Q0SZ29</accession>